<reference key="1">
    <citation type="journal article" date="2007" name="BMC Genomics">
        <title>An annotated catalogue of salivary gland transcripts in the adult female mosquito, Aedes aegypti.</title>
        <authorList>
            <person name="Ribeiro J.M.C."/>
            <person name="Arca B."/>
            <person name="Lombardo F."/>
            <person name="Calvo E."/>
            <person name="Phan V.M."/>
            <person name="Chandra P.K."/>
            <person name="Wikel S.K."/>
        </authorList>
    </citation>
    <scope>NUCLEOTIDE SEQUENCE [LARGE SCALE MRNA]</scope>
    <source>
        <strain>Black-eyed Liverpool</strain>
        <tissue>Salivary gland</tissue>
    </source>
</reference>
<reference key="2">
    <citation type="journal article" date="2007" name="Science">
        <title>Genome sequence of Aedes aegypti, a major arbovirus vector.</title>
        <authorList>
            <person name="Nene V."/>
            <person name="Wortman J.R."/>
            <person name="Lawson D."/>
            <person name="Haas B.J."/>
            <person name="Kodira C.D."/>
            <person name="Tu Z.J."/>
            <person name="Loftus B.J."/>
            <person name="Xi Z."/>
            <person name="Megy K."/>
            <person name="Grabherr M."/>
            <person name="Ren Q."/>
            <person name="Zdobnov E.M."/>
            <person name="Lobo N.F."/>
            <person name="Campbell K.S."/>
            <person name="Brown S.E."/>
            <person name="Bonaldo M.F."/>
            <person name="Zhu J."/>
            <person name="Sinkins S.P."/>
            <person name="Hogenkamp D.G."/>
            <person name="Amedeo P."/>
            <person name="Arensburger P."/>
            <person name="Atkinson P.W."/>
            <person name="Bidwell S.L."/>
            <person name="Biedler J."/>
            <person name="Birney E."/>
            <person name="Bruggner R.V."/>
            <person name="Costas J."/>
            <person name="Coy M.R."/>
            <person name="Crabtree J."/>
            <person name="Crawford M."/>
            <person name="DeBruyn B."/>
            <person name="DeCaprio D."/>
            <person name="Eiglmeier K."/>
            <person name="Eisenstadt E."/>
            <person name="El-Dorry H."/>
            <person name="Gelbart W.M."/>
            <person name="Gomes S.L."/>
            <person name="Hammond M."/>
            <person name="Hannick L.I."/>
            <person name="Hogan J.R."/>
            <person name="Holmes M.H."/>
            <person name="Jaffe D."/>
            <person name="Johnston S.J."/>
            <person name="Kennedy R.C."/>
            <person name="Koo H."/>
            <person name="Kravitz S."/>
            <person name="Kriventseva E.V."/>
            <person name="Kulp D."/>
            <person name="Labutti K."/>
            <person name="Lee E."/>
            <person name="Li S."/>
            <person name="Lovin D.D."/>
            <person name="Mao C."/>
            <person name="Mauceli E."/>
            <person name="Menck C.F."/>
            <person name="Miller J.R."/>
            <person name="Montgomery P."/>
            <person name="Mori A."/>
            <person name="Nascimento A.L."/>
            <person name="Naveira H.F."/>
            <person name="Nusbaum C."/>
            <person name="O'Leary S.B."/>
            <person name="Orvis J."/>
            <person name="Pertea M."/>
            <person name="Quesneville H."/>
            <person name="Reidenbach K.R."/>
            <person name="Rogers Y.-H.C."/>
            <person name="Roth C.W."/>
            <person name="Schneider J.R."/>
            <person name="Schatz M."/>
            <person name="Shumway M."/>
            <person name="Stanke M."/>
            <person name="Stinson E.O."/>
            <person name="Tubio J.M.C."/>
            <person name="Vanzee J.P."/>
            <person name="Verjovski-Almeida S."/>
            <person name="Werner D."/>
            <person name="White O.R."/>
            <person name="Wyder S."/>
            <person name="Zeng Q."/>
            <person name="Zhao Q."/>
            <person name="Zhao Y."/>
            <person name="Hill C.A."/>
            <person name="Raikhel A.S."/>
            <person name="Soares M.B."/>
            <person name="Knudson D.L."/>
            <person name="Lee N.H."/>
            <person name="Galagan J."/>
            <person name="Salzberg S.L."/>
            <person name="Paulsen I.T."/>
            <person name="Dimopoulos G."/>
            <person name="Collins F.H."/>
            <person name="Bruce B."/>
            <person name="Fraser-Liggett C.M."/>
            <person name="Severson D.W."/>
        </authorList>
    </citation>
    <scope>NUCLEOTIDE SEQUENCE [LARGE SCALE GENOMIC DNA]</scope>
    <source>
        <strain>LVPib12</strain>
    </source>
</reference>
<name>VATF_AEDAE</name>
<comment type="function">
    <text evidence="1 2">Subunit of the V1 complex of vacuolar(H+)-ATPase (V-ATPase), a multisubunit enzyme composed of a peripheral complex (V1) that hydrolyzes ATP and a membrane integral complex (V0) that translocates protons (By similarity). V-ATPase is responsible for acidifying and maintaining the pH of intracellular compartments and in some cell types, is targeted to the plasma membrane, where it is responsible for acidifying the extracellular environment (By similarity).</text>
</comment>
<comment type="subunit">
    <text evidence="1">V-ATPase is a heteromultimeric enzyme made up of two complexes: the ATP-hydrolytic V1 complex and the proton translocation V0 complex (By similarity). The V1 complex consists of three catalytic AB heterodimers that form a heterohexamer, three peripheral stalks each consisting of EG heterodimers, one central rotor including subunits D and F, and the regulatory subunits C and H (By similarity). The proton translocation complex V0 consists of the proton transport subunit a, a ring of proteolipid subunits c9c'', rotary subunit d, subunits e and f, and the accessory subunits VhaAC45 and ATP6AP2 (By similarity).</text>
</comment>
<comment type="similarity">
    <text evidence="3">Belongs to the V-ATPase F subunit family.</text>
</comment>
<protein>
    <recommendedName>
        <fullName>V-type proton ATPase subunit F</fullName>
        <shortName>V-ATPase subunit F</shortName>
    </recommendedName>
    <alternativeName>
        <fullName>V-ATPase 14 kDa subunit</fullName>
    </alternativeName>
    <alternativeName>
        <fullName>Vacuolar proton pump subunit F</fullName>
    </alternativeName>
</protein>
<sequence>MALLSAVKGKLISVIGDEDTCVGFLLGGIGEINKNRHPNFMVVDKNTAVSEIEDCFKRFIKRDDIDIILINQNYAEMIRHVIDAHTSPTPAVLEIPSKDHPYDASKDSILRRAKGMFNPDDMVANRG</sequence>
<evidence type="ECO:0000250" key="1">
    <source>
        <dbReference type="UniProtKB" id="Q16864"/>
    </source>
</evidence>
<evidence type="ECO:0000250" key="2">
    <source>
        <dbReference type="UniProtKB" id="Q28029"/>
    </source>
</evidence>
<evidence type="ECO:0000305" key="3"/>
<gene>
    <name type="ORF">AAEL002464</name>
</gene>
<dbReference type="EMBL" id="DQ440436">
    <property type="protein sequence ID" value="ABF18469.1"/>
    <property type="molecule type" value="mRNA"/>
</dbReference>
<dbReference type="EMBL" id="CH477243">
    <property type="protein sequence ID" value="EAT46336.1"/>
    <property type="molecule type" value="Genomic_DNA"/>
</dbReference>
<dbReference type="SMR" id="Q1HQK8"/>
<dbReference type="FunCoup" id="Q1HQK8">
    <property type="interactions" value="1316"/>
</dbReference>
<dbReference type="STRING" id="7159.Q1HQK8"/>
<dbReference type="PaxDb" id="7159-AAEL002464-PA"/>
<dbReference type="EnsemblMetazoa" id="AAEL002464-RA">
    <property type="protein sequence ID" value="AAEL002464-PA"/>
    <property type="gene ID" value="AAEL002464"/>
</dbReference>
<dbReference type="GeneID" id="5574816"/>
<dbReference type="KEGG" id="aag:5574816"/>
<dbReference type="VEuPathDB" id="VectorBase:AAEL002464"/>
<dbReference type="eggNOG" id="KOG3432">
    <property type="taxonomic scope" value="Eukaryota"/>
</dbReference>
<dbReference type="HOGENOM" id="CLU_135754_0_0_1"/>
<dbReference type="InParanoid" id="Q1HQK8"/>
<dbReference type="OMA" id="IIICQHI"/>
<dbReference type="OrthoDB" id="10261947at2759"/>
<dbReference type="PhylomeDB" id="Q1HQK8"/>
<dbReference type="Proteomes" id="UP000008820">
    <property type="component" value="Chromosome 3"/>
</dbReference>
<dbReference type="Proteomes" id="UP000682892">
    <property type="component" value="Unassembled WGS sequence"/>
</dbReference>
<dbReference type="GO" id="GO:0033180">
    <property type="term" value="C:proton-transporting V-type ATPase, V1 domain"/>
    <property type="evidence" value="ECO:0007669"/>
    <property type="project" value="InterPro"/>
</dbReference>
<dbReference type="GO" id="GO:0046961">
    <property type="term" value="F:proton-transporting ATPase activity, rotational mechanism"/>
    <property type="evidence" value="ECO:0007669"/>
    <property type="project" value="InterPro"/>
</dbReference>
<dbReference type="FunFam" id="3.40.50.10580:FF:000001">
    <property type="entry name" value="V-type proton ATPase subunit F"/>
    <property type="match status" value="1"/>
</dbReference>
<dbReference type="Gene3D" id="3.40.50.10580">
    <property type="entry name" value="ATPase, V1 complex, subunit F"/>
    <property type="match status" value="1"/>
</dbReference>
<dbReference type="InterPro" id="IPR008218">
    <property type="entry name" value="ATPase_V1-cplx_f_g_su"/>
</dbReference>
<dbReference type="InterPro" id="IPR005772">
    <property type="entry name" value="ATPase_V1-cplx_fsu_euk"/>
</dbReference>
<dbReference type="InterPro" id="IPR036906">
    <property type="entry name" value="ATPase_V1_fsu_sf"/>
</dbReference>
<dbReference type="NCBIfam" id="TIGR01101">
    <property type="entry name" value="V_ATP_synt_F"/>
    <property type="match status" value="1"/>
</dbReference>
<dbReference type="PANTHER" id="PTHR13861:SF2">
    <property type="entry name" value="V-TYPE PROTON ATPASE SUBUNIT F"/>
    <property type="match status" value="1"/>
</dbReference>
<dbReference type="PANTHER" id="PTHR13861">
    <property type="entry name" value="VACUOLAR ATP SYNTHASE SUBUNIT F"/>
    <property type="match status" value="1"/>
</dbReference>
<dbReference type="Pfam" id="PF01990">
    <property type="entry name" value="ATP-synt_F"/>
    <property type="match status" value="1"/>
</dbReference>
<dbReference type="PIRSF" id="PIRSF015945">
    <property type="entry name" value="ATPase_V1_F_euk"/>
    <property type="match status" value="1"/>
</dbReference>
<dbReference type="SUPFAM" id="SSF159468">
    <property type="entry name" value="AtpF-like"/>
    <property type="match status" value="1"/>
</dbReference>
<organism>
    <name type="scientific">Aedes aegypti</name>
    <name type="common">Yellowfever mosquito</name>
    <name type="synonym">Culex aegypti</name>
    <dbReference type="NCBI Taxonomy" id="7159"/>
    <lineage>
        <taxon>Eukaryota</taxon>
        <taxon>Metazoa</taxon>
        <taxon>Ecdysozoa</taxon>
        <taxon>Arthropoda</taxon>
        <taxon>Hexapoda</taxon>
        <taxon>Insecta</taxon>
        <taxon>Pterygota</taxon>
        <taxon>Neoptera</taxon>
        <taxon>Endopterygota</taxon>
        <taxon>Diptera</taxon>
        <taxon>Nematocera</taxon>
        <taxon>Culicoidea</taxon>
        <taxon>Culicidae</taxon>
        <taxon>Culicinae</taxon>
        <taxon>Aedini</taxon>
        <taxon>Aedes</taxon>
        <taxon>Stegomyia</taxon>
    </lineage>
</organism>
<feature type="chain" id="PRO_0000406048" description="V-type proton ATPase subunit F">
    <location>
        <begin position="1"/>
        <end position="127"/>
    </location>
</feature>
<keyword id="KW-0375">Hydrogen ion transport</keyword>
<keyword id="KW-0406">Ion transport</keyword>
<keyword id="KW-1185">Reference proteome</keyword>
<keyword id="KW-0813">Transport</keyword>
<accession>Q1HQK8</accession>
<proteinExistence type="evidence at transcript level"/>